<proteinExistence type="inferred from homology"/>
<sequence length="156" mass="17562">MPRRRVIGQRKILPDPKFGSELLAKFVNILMVDGKKSTAESIAYSALETLAQRSGKSELEAFEVALENVRPTVEVKSRRVGGSTYQVPVEVRPVRRNALAMRWIVEAARKRGDKSMALRLANELSDAADNKGTAVKKREDVHRMAEANKAFAHYRW</sequence>
<evidence type="ECO:0000255" key="1">
    <source>
        <dbReference type="HAMAP-Rule" id="MF_00480"/>
    </source>
</evidence>
<evidence type="ECO:0000305" key="2"/>
<reference key="1">
    <citation type="journal article" date="2005" name="Nucleic Acids Res.">
        <title>The genome sequence of Salmonella enterica serovar Choleraesuis, a highly invasive and resistant zoonotic pathogen.</title>
        <authorList>
            <person name="Chiu C.-H."/>
            <person name="Tang P."/>
            <person name="Chu C."/>
            <person name="Hu S."/>
            <person name="Bao Q."/>
            <person name="Yu J."/>
            <person name="Chou Y.-Y."/>
            <person name="Wang H.-S."/>
            <person name="Lee Y.-S."/>
        </authorList>
    </citation>
    <scope>NUCLEOTIDE SEQUENCE [LARGE SCALE GENOMIC DNA]</scope>
    <source>
        <strain>SC-B67</strain>
    </source>
</reference>
<feature type="chain" id="PRO_0000226525" description="Small ribosomal subunit protein uS7">
    <location>
        <begin position="1"/>
        <end position="156"/>
    </location>
</feature>
<comment type="function">
    <text evidence="1">One of the primary rRNA binding proteins, it binds directly to 16S rRNA where it nucleates assembly of the head domain of the 30S subunit. Is located at the subunit interface close to the decoding center, probably blocks exit of the E-site tRNA.</text>
</comment>
<comment type="subunit">
    <text evidence="1">Part of the 30S ribosomal subunit. Contacts proteins S9 and S11.</text>
</comment>
<comment type="similarity">
    <text evidence="1">Belongs to the universal ribosomal protein uS7 family.</text>
</comment>
<name>RS7_SALCH</name>
<gene>
    <name evidence="1" type="primary">rpsG</name>
    <name type="ordered locus">SCH_3381</name>
</gene>
<organism>
    <name type="scientific">Salmonella choleraesuis (strain SC-B67)</name>
    <dbReference type="NCBI Taxonomy" id="321314"/>
    <lineage>
        <taxon>Bacteria</taxon>
        <taxon>Pseudomonadati</taxon>
        <taxon>Pseudomonadota</taxon>
        <taxon>Gammaproteobacteria</taxon>
        <taxon>Enterobacterales</taxon>
        <taxon>Enterobacteriaceae</taxon>
        <taxon>Salmonella</taxon>
    </lineage>
</organism>
<protein>
    <recommendedName>
        <fullName evidence="1">Small ribosomal subunit protein uS7</fullName>
    </recommendedName>
    <alternativeName>
        <fullName evidence="2">30S ribosomal protein S7</fullName>
    </alternativeName>
</protein>
<dbReference type="EMBL" id="AE017220">
    <property type="protein sequence ID" value="AAX67287.1"/>
    <property type="molecule type" value="Genomic_DNA"/>
</dbReference>
<dbReference type="RefSeq" id="WP_001541002.1">
    <property type="nucleotide sequence ID" value="NC_006905.1"/>
</dbReference>
<dbReference type="SMR" id="Q57J25"/>
<dbReference type="KEGG" id="sec:SCH_3381"/>
<dbReference type="HOGENOM" id="CLU_072226_1_1_6"/>
<dbReference type="Proteomes" id="UP000000538">
    <property type="component" value="Chromosome"/>
</dbReference>
<dbReference type="GO" id="GO:0015935">
    <property type="term" value="C:small ribosomal subunit"/>
    <property type="evidence" value="ECO:0007669"/>
    <property type="project" value="InterPro"/>
</dbReference>
<dbReference type="GO" id="GO:0019843">
    <property type="term" value="F:rRNA binding"/>
    <property type="evidence" value="ECO:0007669"/>
    <property type="project" value="UniProtKB-UniRule"/>
</dbReference>
<dbReference type="GO" id="GO:0003735">
    <property type="term" value="F:structural constituent of ribosome"/>
    <property type="evidence" value="ECO:0007669"/>
    <property type="project" value="InterPro"/>
</dbReference>
<dbReference type="GO" id="GO:0000049">
    <property type="term" value="F:tRNA binding"/>
    <property type="evidence" value="ECO:0007669"/>
    <property type="project" value="UniProtKB-UniRule"/>
</dbReference>
<dbReference type="GO" id="GO:0006412">
    <property type="term" value="P:translation"/>
    <property type="evidence" value="ECO:0007669"/>
    <property type="project" value="UniProtKB-UniRule"/>
</dbReference>
<dbReference type="CDD" id="cd14869">
    <property type="entry name" value="uS7_Bacteria"/>
    <property type="match status" value="1"/>
</dbReference>
<dbReference type="FunFam" id="1.10.455.10:FF:000001">
    <property type="entry name" value="30S ribosomal protein S7"/>
    <property type="match status" value="1"/>
</dbReference>
<dbReference type="Gene3D" id="1.10.455.10">
    <property type="entry name" value="Ribosomal protein S7 domain"/>
    <property type="match status" value="1"/>
</dbReference>
<dbReference type="HAMAP" id="MF_00480_B">
    <property type="entry name" value="Ribosomal_uS7_B"/>
    <property type="match status" value="1"/>
</dbReference>
<dbReference type="InterPro" id="IPR000235">
    <property type="entry name" value="Ribosomal_uS7"/>
</dbReference>
<dbReference type="InterPro" id="IPR005717">
    <property type="entry name" value="Ribosomal_uS7_bac/org-type"/>
</dbReference>
<dbReference type="InterPro" id="IPR023798">
    <property type="entry name" value="Ribosomal_uS7_dom"/>
</dbReference>
<dbReference type="InterPro" id="IPR036823">
    <property type="entry name" value="Ribosomal_uS7_dom_sf"/>
</dbReference>
<dbReference type="NCBIfam" id="TIGR01029">
    <property type="entry name" value="rpsG_bact"/>
    <property type="match status" value="1"/>
</dbReference>
<dbReference type="PANTHER" id="PTHR11205">
    <property type="entry name" value="RIBOSOMAL PROTEIN S7"/>
    <property type="match status" value="1"/>
</dbReference>
<dbReference type="Pfam" id="PF00177">
    <property type="entry name" value="Ribosomal_S7"/>
    <property type="match status" value="1"/>
</dbReference>
<dbReference type="PIRSF" id="PIRSF002122">
    <property type="entry name" value="RPS7p_RPS7a_RPS5e_RPS7o"/>
    <property type="match status" value="1"/>
</dbReference>
<dbReference type="SUPFAM" id="SSF47973">
    <property type="entry name" value="Ribosomal protein S7"/>
    <property type="match status" value="1"/>
</dbReference>
<accession>Q57J25</accession>
<keyword id="KW-0687">Ribonucleoprotein</keyword>
<keyword id="KW-0689">Ribosomal protein</keyword>
<keyword id="KW-0694">RNA-binding</keyword>
<keyword id="KW-0699">rRNA-binding</keyword>
<keyword id="KW-0820">tRNA-binding</keyword>